<protein>
    <recommendedName>
        <fullName evidence="11">Trehalase</fullName>
        <ecNumber evidence="1">3.2.1.28</ecNumber>
    </recommendedName>
    <alternativeName>
        <fullName>Alpha,alpha-trehalase</fullName>
    </alternativeName>
    <alternativeName>
        <fullName>Alpha,alpha-trehalose glucohydrolase</fullName>
    </alternativeName>
</protein>
<accession>Q9W2M2</accession>
<accession>Q0E903</accession>
<accession>Q0E904</accession>
<accession>Q7YWL2</accession>
<accession>Q961P0</accession>
<accession>Q9W2M1</accession>
<accession>Q9W2M3</accession>
<reference key="1">
    <citation type="journal article" date="2000" name="Science">
        <title>The genome sequence of Drosophila melanogaster.</title>
        <authorList>
            <person name="Adams M.D."/>
            <person name="Celniker S.E."/>
            <person name="Holt R.A."/>
            <person name="Evans C.A."/>
            <person name="Gocayne J.D."/>
            <person name="Amanatides P.G."/>
            <person name="Scherer S.E."/>
            <person name="Li P.W."/>
            <person name="Hoskins R.A."/>
            <person name="Galle R.F."/>
            <person name="George R.A."/>
            <person name="Lewis S.E."/>
            <person name="Richards S."/>
            <person name="Ashburner M."/>
            <person name="Henderson S.N."/>
            <person name="Sutton G.G."/>
            <person name="Wortman J.R."/>
            <person name="Yandell M.D."/>
            <person name="Zhang Q."/>
            <person name="Chen L.X."/>
            <person name="Brandon R.C."/>
            <person name="Rogers Y.-H.C."/>
            <person name="Blazej R.G."/>
            <person name="Champe M."/>
            <person name="Pfeiffer B.D."/>
            <person name="Wan K.H."/>
            <person name="Doyle C."/>
            <person name="Baxter E.G."/>
            <person name="Helt G."/>
            <person name="Nelson C.R."/>
            <person name="Miklos G.L.G."/>
            <person name="Abril J.F."/>
            <person name="Agbayani A."/>
            <person name="An H.-J."/>
            <person name="Andrews-Pfannkoch C."/>
            <person name="Baldwin D."/>
            <person name="Ballew R.M."/>
            <person name="Basu A."/>
            <person name="Baxendale J."/>
            <person name="Bayraktaroglu L."/>
            <person name="Beasley E.M."/>
            <person name="Beeson K.Y."/>
            <person name="Benos P.V."/>
            <person name="Berman B.P."/>
            <person name="Bhandari D."/>
            <person name="Bolshakov S."/>
            <person name="Borkova D."/>
            <person name="Botchan M.R."/>
            <person name="Bouck J."/>
            <person name="Brokstein P."/>
            <person name="Brottier P."/>
            <person name="Burtis K.C."/>
            <person name="Busam D.A."/>
            <person name="Butler H."/>
            <person name="Cadieu E."/>
            <person name="Center A."/>
            <person name="Chandra I."/>
            <person name="Cherry J.M."/>
            <person name="Cawley S."/>
            <person name="Dahlke C."/>
            <person name="Davenport L.B."/>
            <person name="Davies P."/>
            <person name="de Pablos B."/>
            <person name="Delcher A."/>
            <person name="Deng Z."/>
            <person name="Mays A.D."/>
            <person name="Dew I."/>
            <person name="Dietz S.M."/>
            <person name="Dodson K."/>
            <person name="Doup L.E."/>
            <person name="Downes M."/>
            <person name="Dugan-Rocha S."/>
            <person name="Dunkov B.C."/>
            <person name="Dunn P."/>
            <person name="Durbin K.J."/>
            <person name="Evangelista C.C."/>
            <person name="Ferraz C."/>
            <person name="Ferriera S."/>
            <person name="Fleischmann W."/>
            <person name="Fosler C."/>
            <person name="Gabrielian A.E."/>
            <person name="Garg N.S."/>
            <person name="Gelbart W.M."/>
            <person name="Glasser K."/>
            <person name="Glodek A."/>
            <person name="Gong F."/>
            <person name="Gorrell J.H."/>
            <person name="Gu Z."/>
            <person name="Guan P."/>
            <person name="Harris M."/>
            <person name="Harris N.L."/>
            <person name="Harvey D.A."/>
            <person name="Heiman T.J."/>
            <person name="Hernandez J.R."/>
            <person name="Houck J."/>
            <person name="Hostin D."/>
            <person name="Houston K.A."/>
            <person name="Howland T.J."/>
            <person name="Wei M.-H."/>
            <person name="Ibegwam C."/>
            <person name="Jalali M."/>
            <person name="Kalush F."/>
            <person name="Karpen G.H."/>
            <person name="Ke Z."/>
            <person name="Kennison J.A."/>
            <person name="Ketchum K.A."/>
            <person name="Kimmel B.E."/>
            <person name="Kodira C.D."/>
            <person name="Kraft C.L."/>
            <person name="Kravitz S."/>
            <person name="Kulp D."/>
            <person name="Lai Z."/>
            <person name="Lasko P."/>
            <person name="Lei Y."/>
            <person name="Levitsky A.A."/>
            <person name="Li J.H."/>
            <person name="Li Z."/>
            <person name="Liang Y."/>
            <person name="Lin X."/>
            <person name="Liu X."/>
            <person name="Mattei B."/>
            <person name="McIntosh T.C."/>
            <person name="McLeod M.P."/>
            <person name="McPherson D."/>
            <person name="Merkulov G."/>
            <person name="Milshina N.V."/>
            <person name="Mobarry C."/>
            <person name="Morris J."/>
            <person name="Moshrefi A."/>
            <person name="Mount S.M."/>
            <person name="Moy M."/>
            <person name="Murphy B."/>
            <person name="Murphy L."/>
            <person name="Muzny D.M."/>
            <person name="Nelson D.L."/>
            <person name="Nelson D.R."/>
            <person name="Nelson K.A."/>
            <person name="Nixon K."/>
            <person name="Nusskern D.R."/>
            <person name="Pacleb J.M."/>
            <person name="Palazzolo M."/>
            <person name="Pittman G.S."/>
            <person name="Pan S."/>
            <person name="Pollard J."/>
            <person name="Puri V."/>
            <person name="Reese M.G."/>
            <person name="Reinert K."/>
            <person name="Remington K."/>
            <person name="Saunders R.D.C."/>
            <person name="Scheeler F."/>
            <person name="Shen H."/>
            <person name="Shue B.C."/>
            <person name="Siden-Kiamos I."/>
            <person name="Simpson M."/>
            <person name="Skupski M.P."/>
            <person name="Smith T.J."/>
            <person name="Spier E."/>
            <person name="Spradling A.C."/>
            <person name="Stapleton M."/>
            <person name="Strong R."/>
            <person name="Sun E."/>
            <person name="Svirskas R."/>
            <person name="Tector C."/>
            <person name="Turner R."/>
            <person name="Venter E."/>
            <person name="Wang A.H."/>
            <person name="Wang X."/>
            <person name="Wang Z.-Y."/>
            <person name="Wassarman D.A."/>
            <person name="Weinstock G.M."/>
            <person name="Weissenbach J."/>
            <person name="Williams S.M."/>
            <person name="Woodage T."/>
            <person name="Worley K.C."/>
            <person name="Wu D."/>
            <person name="Yang S."/>
            <person name="Yao Q.A."/>
            <person name="Ye J."/>
            <person name="Yeh R.-F."/>
            <person name="Zaveri J.S."/>
            <person name="Zhan M."/>
            <person name="Zhang G."/>
            <person name="Zhao Q."/>
            <person name="Zheng L."/>
            <person name="Zheng X.H."/>
            <person name="Zhong F.N."/>
            <person name="Zhong W."/>
            <person name="Zhou X."/>
            <person name="Zhu S.C."/>
            <person name="Zhu X."/>
            <person name="Smith H.O."/>
            <person name="Gibbs R.A."/>
            <person name="Myers E.W."/>
            <person name="Rubin G.M."/>
            <person name="Venter J.C."/>
        </authorList>
    </citation>
    <scope>NUCLEOTIDE SEQUENCE [LARGE SCALE GENOMIC DNA]</scope>
    <source>
        <strain>Berkeley</strain>
    </source>
</reference>
<reference key="2">
    <citation type="journal article" date="2002" name="Genome Biol.">
        <title>Annotation of the Drosophila melanogaster euchromatic genome: a systematic review.</title>
        <authorList>
            <person name="Misra S."/>
            <person name="Crosby M.A."/>
            <person name="Mungall C.J."/>
            <person name="Matthews B.B."/>
            <person name="Campbell K.S."/>
            <person name="Hradecky P."/>
            <person name="Huang Y."/>
            <person name="Kaminker J.S."/>
            <person name="Millburn G.H."/>
            <person name="Prochnik S.E."/>
            <person name="Smith C.D."/>
            <person name="Tupy J.L."/>
            <person name="Whitfield E.J."/>
            <person name="Bayraktaroglu L."/>
            <person name="Berman B.P."/>
            <person name="Bettencourt B.R."/>
            <person name="Celniker S.E."/>
            <person name="de Grey A.D.N.J."/>
            <person name="Drysdale R.A."/>
            <person name="Harris N.L."/>
            <person name="Richter J."/>
            <person name="Russo S."/>
            <person name="Schroeder A.J."/>
            <person name="Shu S.Q."/>
            <person name="Stapleton M."/>
            <person name="Yamada C."/>
            <person name="Ashburner M."/>
            <person name="Gelbart W.M."/>
            <person name="Rubin G.M."/>
            <person name="Lewis S.E."/>
        </authorList>
    </citation>
    <scope>GENOME REANNOTATION</scope>
    <scope>ALTERNATIVE SPLICING</scope>
    <source>
        <strain>Berkeley</strain>
    </source>
</reference>
<reference key="3">
    <citation type="journal article" date="2002" name="Genome Biol.">
        <title>A Drosophila full-length cDNA resource.</title>
        <authorList>
            <person name="Stapleton M."/>
            <person name="Carlson J.W."/>
            <person name="Brokstein P."/>
            <person name="Yu C."/>
            <person name="Champe M."/>
            <person name="George R.A."/>
            <person name="Guarin H."/>
            <person name="Kronmiller B."/>
            <person name="Pacleb J.M."/>
            <person name="Park S."/>
            <person name="Wan K.H."/>
            <person name="Rubin G.M."/>
            <person name="Celniker S.E."/>
        </authorList>
    </citation>
    <scope>NUCLEOTIDE SEQUENCE [LARGE SCALE MRNA] (ISOFORM A)</scope>
    <source>
        <strain>Berkeley</strain>
        <tissue>Head</tissue>
    </source>
</reference>
<reference key="4">
    <citation type="journal article" date="2007" name="Glycobiology">
        <title>Identification of N-glycosylated proteins from the central nervous system of Drosophila melanogaster.</title>
        <authorList>
            <person name="Koles K."/>
            <person name="Lim J.-M."/>
            <person name="Aoki K."/>
            <person name="Porterfield M."/>
            <person name="Tiemeyer M."/>
            <person name="Wells L."/>
            <person name="Panin V."/>
        </authorList>
    </citation>
    <scope>GLYCOSYLATION [LARGE SCALE ANALYSIS] AT ASN-451</scope>
    <scope>IDENTIFICATION BY MASS SPECTROMETRY</scope>
    <source>
        <strain>Oregon-R</strain>
        <tissue>Head</tissue>
    </source>
</reference>
<reference key="5">
    <citation type="journal article" date="2015" name="Cell Metab.">
        <title>Glial Glycolysis Is Essential for Neuronal Survival in Drosophila.</title>
        <authorList>
            <person name="Volkenhoff A."/>
            <person name="Weiler A."/>
            <person name="Letzel M."/>
            <person name="Stehling M."/>
            <person name="Klaembt C."/>
            <person name="Schirmeier S."/>
        </authorList>
    </citation>
    <scope>FUNCTION</scope>
    <scope>TISSUE SPECIFICITY</scope>
    <scope>DEVELOPMENTAL STAGE</scope>
    <scope>DISRUPTION PHENOTYPE</scope>
</reference>
<dbReference type="EC" id="3.2.1.28" evidence="1"/>
<dbReference type="EMBL" id="AE013599">
    <property type="protein sequence ID" value="AAF46668.1"/>
    <property type="molecule type" value="Genomic_DNA"/>
</dbReference>
<dbReference type="EMBL" id="AE013599">
    <property type="protein sequence ID" value="AAF46669.1"/>
    <property type="molecule type" value="Genomic_DNA"/>
</dbReference>
<dbReference type="EMBL" id="AE013599">
    <property type="protein sequence ID" value="AAM68192.1"/>
    <property type="molecule type" value="Genomic_DNA"/>
</dbReference>
<dbReference type="EMBL" id="AY051466">
    <property type="protein sequence ID" value="AAK92890.1"/>
    <property type="molecule type" value="mRNA"/>
</dbReference>
<dbReference type="RefSeq" id="NP_001261115.1">
    <molecule id="Q9W2M2-2"/>
    <property type="nucleotide sequence ID" value="NM_001274186.1"/>
</dbReference>
<dbReference type="RefSeq" id="NP_524821.1">
    <molecule id="Q9W2M2-2"/>
    <property type="nucleotide sequence ID" value="NM_080082.3"/>
</dbReference>
<dbReference type="RefSeq" id="NP_726023.1">
    <molecule id="Q9W2M2-2"/>
    <property type="nucleotide sequence ID" value="NM_166421.2"/>
</dbReference>
<dbReference type="RefSeq" id="NP_726024.1">
    <molecule id="Q9W2M2-2"/>
    <property type="nucleotide sequence ID" value="NM_166422.2"/>
</dbReference>
<dbReference type="RefSeq" id="NP_726025.1">
    <molecule id="Q9W2M2-1"/>
    <property type="nucleotide sequence ID" value="NM_166423.3"/>
</dbReference>
<dbReference type="RefSeq" id="NP_726026.1">
    <molecule id="Q9W2M2-1"/>
    <property type="nucleotide sequence ID" value="NM_166424.2"/>
</dbReference>
<dbReference type="RefSeq" id="NP_726027.1">
    <molecule id="Q9W2M2-3"/>
    <property type="nucleotide sequence ID" value="NM_166425.2"/>
</dbReference>
<dbReference type="SMR" id="Q9W2M2"/>
<dbReference type="BioGRID" id="69627">
    <property type="interactions" value="27"/>
</dbReference>
<dbReference type="DIP" id="DIP-23202N"/>
<dbReference type="FunCoup" id="Q9W2M2">
    <property type="interactions" value="275"/>
</dbReference>
<dbReference type="IntAct" id="Q9W2M2">
    <property type="interactions" value="23"/>
</dbReference>
<dbReference type="STRING" id="7227.FBpp0071468"/>
<dbReference type="CAZy" id="GH37">
    <property type="family name" value="Glycoside Hydrolase Family 37"/>
</dbReference>
<dbReference type="GlyCosmos" id="Q9W2M2">
    <property type="glycosylation" value="5 sites, No reported glycans"/>
</dbReference>
<dbReference type="GlyGen" id="Q9W2M2">
    <property type="glycosylation" value="5 sites"/>
</dbReference>
<dbReference type="iPTMnet" id="Q9W2M2"/>
<dbReference type="PaxDb" id="7227-FBpp0071468"/>
<dbReference type="DNASU" id="45368"/>
<dbReference type="EnsemblMetazoa" id="FBtr0071535">
    <molecule id="Q9W2M2-2"/>
    <property type="protein sequence ID" value="FBpp0071464"/>
    <property type="gene ID" value="FBgn0003748"/>
</dbReference>
<dbReference type="EnsemblMetazoa" id="FBtr0071536">
    <molecule id="Q9W2M2-2"/>
    <property type="protein sequence ID" value="FBpp0071465"/>
    <property type="gene ID" value="FBgn0003748"/>
</dbReference>
<dbReference type="EnsemblMetazoa" id="FBtr0071537">
    <molecule id="Q9W2M2-2"/>
    <property type="protein sequence ID" value="FBpp0071466"/>
    <property type="gene ID" value="FBgn0003748"/>
</dbReference>
<dbReference type="EnsemblMetazoa" id="FBtr0071538">
    <molecule id="Q9W2M2-3"/>
    <property type="protein sequence ID" value="FBpp0071467"/>
    <property type="gene ID" value="FBgn0003748"/>
</dbReference>
<dbReference type="EnsemblMetazoa" id="FBtr0071539">
    <molecule id="Q9W2M2-1"/>
    <property type="protein sequence ID" value="FBpp0071468"/>
    <property type="gene ID" value="FBgn0003748"/>
</dbReference>
<dbReference type="EnsemblMetazoa" id="FBtr0071540">
    <molecule id="Q9W2M2-1"/>
    <property type="protein sequence ID" value="FBpp0071469"/>
    <property type="gene ID" value="FBgn0003748"/>
</dbReference>
<dbReference type="EnsemblMetazoa" id="FBtr0332423">
    <molecule id="Q9W2M2-2"/>
    <property type="protein sequence ID" value="FBpp0304696"/>
    <property type="gene ID" value="FBgn0003748"/>
</dbReference>
<dbReference type="GeneID" id="45368"/>
<dbReference type="KEGG" id="dme:Dmel_CG9364"/>
<dbReference type="UCSC" id="CG9364-RA">
    <molecule id="Q9W2M2-1"/>
    <property type="organism name" value="d. melanogaster"/>
</dbReference>
<dbReference type="AGR" id="FB:FBgn0003748"/>
<dbReference type="CTD" id="11181"/>
<dbReference type="FlyBase" id="FBgn0003748">
    <property type="gene designation" value="Treh"/>
</dbReference>
<dbReference type="VEuPathDB" id="VectorBase:FBgn0003748"/>
<dbReference type="eggNOG" id="KOG0602">
    <property type="taxonomic scope" value="Eukaryota"/>
</dbReference>
<dbReference type="GeneTree" id="ENSGT00390000006949"/>
<dbReference type="InParanoid" id="Q9W2M2"/>
<dbReference type="OMA" id="RYWDASD"/>
<dbReference type="OrthoDB" id="3542292at2759"/>
<dbReference type="PhylomeDB" id="Q9W2M2"/>
<dbReference type="BRENDA" id="3.2.1.28">
    <property type="organism ID" value="1994"/>
</dbReference>
<dbReference type="BioGRID-ORCS" id="45368">
    <property type="hits" value="0 hits in 1 CRISPR screen"/>
</dbReference>
<dbReference type="GenomeRNAi" id="45368"/>
<dbReference type="PRO" id="PR:Q9W2M2"/>
<dbReference type="Proteomes" id="UP000000803">
    <property type="component" value="Chromosome 2R"/>
</dbReference>
<dbReference type="Bgee" id="FBgn0003748">
    <property type="expression patterns" value="Expressed in oviduct (Drosophila) and 224 other cell types or tissues"/>
</dbReference>
<dbReference type="ExpressionAtlas" id="Q9W2M2">
    <property type="expression patterns" value="baseline and differential"/>
</dbReference>
<dbReference type="GO" id="GO:0005829">
    <property type="term" value="C:cytosol"/>
    <property type="evidence" value="ECO:0000314"/>
    <property type="project" value="FlyBase"/>
</dbReference>
<dbReference type="GO" id="GO:0005615">
    <property type="term" value="C:extracellular space"/>
    <property type="evidence" value="ECO:0000314"/>
    <property type="project" value="FlyBase"/>
</dbReference>
<dbReference type="GO" id="GO:0004555">
    <property type="term" value="F:alpha,alpha-trehalase activity"/>
    <property type="evidence" value="ECO:0000314"/>
    <property type="project" value="FlyBase"/>
</dbReference>
<dbReference type="GO" id="GO:0005993">
    <property type="term" value="P:trehalose catabolic process"/>
    <property type="evidence" value="ECO:0000315"/>
    <property type="project" value="FlyBase"/>
</dbReference>
<dbReference type="FunFam" id="1.50.10.10:FF:000034">
    <property type="entry name" value="Trehalase"/>
    <property type="match status" value="1"/>
</dbReference>
<dbReference type="Gene3D" id="1.50.10.10">
    <property type="match status" value="1"/>
</dbReference>
<dbReference type="InterPro" id="IPR008928">
    <property type="entry name" value="6-hairpin_glycosidase_sf"/>
</dbReference>
<dbReference type="InterPro" id="IPR012341">
    <property type="entry name" value="6hp_glycosidase-like_sf"/>
</dbReference>
<dbReference type="InterPro" id="IPR001661">
    <property type="entry name" value="Glyco_hydro_37"/>
</dbReference>
<dbReference type="InterPro" id="IPR018232">
    <property type="entry name" value="Glyco_hydro_37_CS"/>
</dbReference>
<dbReference type="PANTHER" id="PTHR23403">
    <property type="entry name" value="TREHALASE"/>
    <property type="match status" value="1"/>
</dbReference>
<dbReference type="PANTHER" id="PTHR23403:SF1">
    <property type="entry name" value="TREHALASE"/>
    <property type="match status" value="1"/>
</dbReference>
<dbReference type="Pfam" id="PF01204">
    <property type="entry name" value="Trehalase"/>
    <property type="match status" value="1"/>
</dbReference>
<dbReference type="PRINTS" id="PR00744">
    <property type="entry name" value="GLHYDRLASE37"/>
</dbReference>
<dbReference type="SUPFAM" id="SSF48208">
    <property type="entry name" value="Six-hairpin glycosidases"/>
    <property type="match status" value="1"/>
</dbReference>
<dbReference type="PROSITE" id="PS00927">
    <property type="entry name" value="TREHALASE_1"/>
    <property type="match status" value="1"/>
</dbReference>
<dbReference type="PROSITE" id="PS00928">
    <property type="entry name" value="TREHALASE_2"/>
    <property type="match status" value="1"/>
</dbReference>
<comment type="function">
    <text evidence="7 10">Enzyme that cleaves trehalose to produce 2 glucose molecules that can be used by the glycolytic pathway (Probable). Glycolysis is essential in glial cells but not in neurons; neurons rely on the citric acid cycle for their energy needs, and on lactate and alanine secreted into the hemolymph by glial cells to fuel it (PubMed:26235423).</text>
</comment>
<comment type="catalytic activity">
    <reaction evidence="1">
        <text>alpha,alpha-trehalose + H2O = alpha-D-glucose + beta-D-glucose</text>
        <dbReference type="Rhea" id="RHEA:32675"/>
        <dbReference type="ChEBI" id="CHEBI:15377"/>
        <dbReference type="ChEBI" id="CHEBI:15903"/>
        <dbReference type="ChEBI" id="CHEBI:16551"/>
        <dbReference type="ChEBI" id="CHEBI:17925"/>
        <dbReference type="EC" id="3.2.1.28"/>
    </reaction>
</comment>
<comment type="alternative products">
    <event type="alternative splicing"/>
    <isoform>
        <id>Q9W2M2-1</id>
        <name>C</name>
        <name>F</name>
        <sequence type="displayed"/>
    </isoform>
    <isoform>
        <id>Q9W2M2-2</id>
        <name>A</name>
        <name>D</name>
        <sequence type="described" ref="VSP_007735"/>
    </isoform>
    <isoform>
        <id>Q9W2M2-3</id>
        <name>B</name>
        <sequence type="described" ref="VSP_021831"/>
    </isoform>
</comment>
<comment type="tissue specificity">
    <text evidence="7">In the adult brain predominantly expressed in glial cells (at protein level).</text>
</comment>
<comment type="developmental stage">
    <text evidence="7">Expressed at low levels in glial cells at the surface of the larval central nervous system (at protein level).</text>
</comment>
<comment type="disruption phenotype">
    <text evidence="7">Larval lethal in 1st instar (PubMed:26235423). RNAi-mediated knockdown is lethal (PubMed:26235423). Glial-specific RNAi-mediated knockdown is lethal (PubMed:26235423). Neuronal-specific RNAi-mediated knockdown is viable with no defects (PubMed:26235423). Conditional RNAi-mediated knockdown in adult glial cells results in reduced lifespan due to neurodegeneration (PubMed:26235423). Conditional RNAi-mediated knockdown in adult neuronal cells has no effect on lifespan (PubMed:26235423).</text>
</comment>
<comment type="similarity">
    <text evidence="9">Belongs to the glycosyl hydrolase 37 family.</text>
</comment>
<evidence type="ECO:0000250" key="1">
    <source>
        <dbReference type="UniProtKB" id="O43280"/>
    </source>
</evidence>
<evidence type="ECO:0000250" key="2">
    <source>
        <dbReference type="UniProtKB" id="P13482"/>
    </source>
</evidence>
<evidence type="ECO:0000255" key="3"/>
<evidence type="ECO:0000255" key="4">
    <source>
        <dbReference type="PROSITE-ProRule" id="PRU00498"/>
    </source>
</evidence>
<evidence type="ECO:0000256" key="5">
    <source>
        <dbReference type="SAM" id="MobiDB-lite"/>
    </source>
</evidence>
<evidence type="ECO:0000269" key="6">
    <source>
    </source>
</evidence>
<evidence type="ECO:0000269" key="7">
    <source>
    </source>
</evidence>
<evidence type="ECO:0000303" key="8">
    <source>
    </source>
</evidence>
<evidence type="ECO:0000305" key="9"/>
<evidence type="ECO:0000305" key="10">
    <source>
    </source>
</evidence>
<evidence type="ECO:0000312" key="11">
    <source>
        <dbReference type="FlyBase" id="FBgn0003748"/>
    </source>
</evidence>
<evidence type="ECO:0000312" key="12">
    <source>
        <dbReference type="Proteomes" id="UP000000803"/>
    </source>
</evidence>
<organism evidence="12">
    <name type="scientific">Drosophila melanogaster</name>
    <name type="common">Fruit fly</name>
    <dbReference type="NCBI Taxonomy" id="7227"/>
    <lineage>
        <taxon>Eukaryota</taxon>
        <taxon>Metazoa</taxon>
        <taxon>Ecdysozoa</taxon>
        <taxon>Arthropoda</taxon>
        <taxon>Hexapoda</taxon>
        <taxon>Insecta</taxon>
        <taxon>Pterygota</taxon>
        <taxon>Neoptera</taxon>
        <taxon>Endopterygota</taxon>
        <taxon>Diptera</taxon>
        <taxon>Brachycera</taxon>
        <taxon>Muscomorpha</taxon>
        <taxon>Ephydroidea</taxon>
        <taxon>Drosophilidae</taxon>
        <taxon>Drosophila</taxon>
        <taxon>Sophophora</taxon>
    </lineage>
</organism>
<proteinExistence type="evidence at protein level"/>
<sequence length="596" mass="67689">MFKLPTISLLLVSWSCLVALSQAKTYSLPDLTTDYNNAIPVDEEEAQDPFASCKIYCEGNLLHTIQTAVPKLFADSKTFVDMKLNNSPDKTLEDFNAMMEAKNQTPSSEDLKQFVDKYFSAPGTELEKWTPTDWKENPSFLDLISDPDLKQWGVELNSIWKDLGRKMKDEVSKNPEYYSIIPVPNPVIVPGGRFIEFYYWDSYWIIRGLLYSQMFDTARGMIENFFSIVNRFGFIPNGGRVYYHGRSQPPLLTGMVKSYVDFTNDDKFAIDALDTLEHEFEFFVNNHNVTVKNHSLCVYRDSSSGPRPESYREDVETGEEFPTDEAKELHYSELKAGAESGMDFSSRWFISPTGTNDGNRSALSTTSIVPVDLNAYLYWNAKLIAEFHSKAGNTKKVTEYETKAEKLLLGIQEVLWNEEAGVWLDYDMINQKPRDYYTPTNLSPLWVKAFNISESEKISASVMAYIERNKLDSFPGGVPNTLSYTGEQWDAPNVWAPMQYILVEGLNNLNTPEAKNMSLKWATRWVKTNFAAFSKDRHMYEKYNADEFGVGGGGGEYEVQTGFGWSNGVIIEWLSKHGRDISIGSGCGCLAGEKRQ</sequence>
<name>TREA_DROME</name>
<feature type="signal peptide" evidence="3">
    <location>
        <begin position="1"/>
        <end position="23"/>
    </location>
</feature>
<feature type="chain" id="PRO_0000012058" description="Trehalase">
    <location>
        <begin position="24"/>
        <end position="596"/>
    </location>
</feature>
<feature type="region of interest" description="Disordered" evidence="5">
    <location>
        <begin position="303"/>
        <end position="323"/>
    </location>
</feature>
<feature type="active site" description="Proton donor/acceptor" evidence="2">
    <location>
        <position position="343"/>
    </location>
</feature>
<feature type="active site" description="Proton donor/acceptor" evidence="2">
    <location>
        <position position="541"/>
    </location>
</feature>
<feature type="binding site" evidence="2">
    <location>
        <position position="193"/>
    </location>
    <ligand>
        <name>substrate</name>
    </ligand>
</feature>
<feature type="binding site" evidence="2">
    <location>
        <begin position="200"/>
        <end position="201"/>
    </location>
    <ligand>
        <name>substrate</name>
    </ligand>
</feature>
<feature type="binding site" evidence="2">
    <location>
        <position position="237"/>
    </location>
    <ligand>
        <name>substrate</name>
    </ligand>
</feature>
<feature type="binding site" evidence="2">
    <location>
        <begin position="246"/>
        <end position="248"/>
    </location>
    <ligand>
        <name>substrate</name>
    </ligand>
</feature>
<feature type="binding site" evidence="2">
    <location>
        <begin position="307"/>
        <end position="309"/>
    </location>
    <ligand>
        <name>substrate</name>
    </ligand>
</feature>
<feature type="binding site" evidence="2">
    <location>
        <position position="341"/>
    </location>
    <ligand>
        <name>substrate</name>
    </ligand>
</feature>
<feature type="binding site" evidence="2">
    <location>
        <position position="556"/>
    </location>
    <ligand>
        <name>substrate</name>
    </ligand>
</feature>
<feature type="glycosylation site" description="N-linked (GlcNAc...) asparagine" evidence="4">
    <location>
        <position position="288"/>
    </location>
</feature>
<feature type="glycosylation site" description="N-linked (GlcNAc...) asparagine" evidence="4">
    <location>
        <position position="293"/>
    </location>
</feature>
<feature type="glycosylation site" description="N-linked (GlcNAc...) asparagine" evidence="4">
    <location>
        <position position="359"/>
    </location>
</feature>
<feature type="glycosylation site" description="N-linked (GlcNAc...) asparagine" evidence="6">
    <location>
        <position position="451"/>
    </location>
</feature>
<feature type="glycosylation site" description="N-linked (GlcNAc...) asparagine" evidence="4">
    <location>
        <position position="516"/>
    </location>
</feature>
<feature type="splice variant" id="VSP_021831" description="In isoform B." evidence="9">
    <location>
        <begin position="1"/>
        <end position="81"/>
    </location>
</feature>
<feature type="splice variant" id="VSP_007735" description="In isoform A." evidence="8">
    <original>MFKLPTISLLLVSWSCLVALSQAKTYSLPDLTTDYNNAIPVDEEEAQDPFASC</original>
    <variation>MASPANPSSNHKMNGNG</variation>
    <location>
        <begin position="1"/>
        <end position="53"/>
    </location>
</feature>
<gene>
    <name evidence="11" type="primary">Treh</name>
    <name evidence="11" type="ORF">CG9364</name>
</gene>
<keyword id="KW-0025">Alternative splicing</keyword>
<keyword id="KW-0325">Glycoprotein</keyword>
<keyword id="KW-0326">Glycosidase</keyword>
<keyword id="KW-0378">Hydrolase</keyword>
<keyword id="KW-1185">Reference proteome</keyword>
<keyword id="KW-0732">Signal</keyword>